<reference key="1">
    <citation type="submission" date="2007-09" db="EMBL/GenBank/DDBJ databases">
        <title>Complete sequence of chromosome of Serratia proteamaculans 568.</title>
        <authorList>
            <consortium name="US DOE Joint Genome Institute"/>
            <person name="Copeland A."/>
            <person name="Lucas S."/>
            <person name="Lapidus A."/>
            <person name="Barry K."/>
            <person name="Glavina del Rio T."/>
            <person name="Dalin E."/>
            <person name="Tice H."/>
            <person name="Pitluck S."/>
            <person name="Chain P."/>
            <person name="Malfatti S."/>
            <person name="Shin M."/>
            <person name="Vergez L."/>
            <person name="Schmutz J."/>
            <person name="Larimer F."/>
            <person name="Land M."/>
            <person name="Hauser L."/>
            <person name="Kyrpides N."/>
            <person name="Kim E."/>
            <person name="Taghavi S."/>
            <person name="Newman L."/>
            <person name="Vangronsveld J."/>
            <person name="van der Lelie D."/>
            <person name="Richardson P."/>
        </authorList>
    </citation>
    <scope>NUCLEOTIDE SEQUENCE [LARGE SCALE GENOMIC DNA]</scope>
    <source>
        <strain>568</strain>
    </source>
</reference>
<feature type="chain" id="PRO_1000065464" description="UPF0299 membrane protein Spro_1570">
    <location>
        <begin position="1"/>
        <end position="135"/>
    </location>
</feature>
<feature type="transmembrane region" description="Helical" evidence="1">
    <location>
        <begin position="4"/>
        <end position="24"/>
    </location>
</feature>
<feature type="transmembrane region" description="Helical" evidence="1">
    <location>
        <begin position="30"/>
        <end position="50"/>
    </location>
</feature>
<feature type="transmembrane region" description="Helical" evidence="1">
    <location>
        <begin position="63"/>
        <end position="83"/>
    </location>
</feature>
<feature type="transmembrane region" description="Helical" evidence="1">
    <location>
        <begin position="93"/>
        <end position="113"/>
    </location>
</feature>
<dbReference type="EMBL" id="CP000826">
    <property type="protein sequence ID" value="ABV40674.1"/>
    <property type="molecule type" value="Genomic_DNA"/>
</dbReference>
<dbReference type="STRING" id="399741.Spro_1570"/>
<dbReference type="KEGG" id="spe:Spro_1570"/>
<dbReference type="eggNOG" id="COG1380">
    <property type="taxonomic scope" value="Bacteria"/>
</dbReference>
<dbReference type="HOGENOM" id="CLU_113736_1_1_6"/>
<dbReference type="OrthoDB" id="385012at2"/>
<dbReference type="GO" id="GO:0005886">
    <property type="term" value="C:plasma membrane"/>
    <property type="evidence" value="ECO:0007669"/>
    <property type="project" value="UniProtKB-SubCell"/>
</dbReference>
<dbReference type="HAMAP" id="MF_01144">
    <property type="entry name" value="UPF0299"/>
    <property type="match status" value="1"/>
</dbReference>
<dbReference type="InterPro" id="IPR005538">
    <property type="entry name" value="LrgA/CidA"/>
</dbReference>
<dbReference type="InterPro" id="IPR022957">
    <property type="entry name" value="Uncharacterised_UPF0299"/>
</dbReference>
<dbReference type="NCBIfam" id="NF002494">
    <property type="entry name" value="PRK01821.1"/>
    <property type="match status" value="1"/>
</dbReference>
<dbReference type="PANTHER" id="PTHR33931">
    <property type="entry name" value="HOLIN-LIKE PROTEIN CIDA-RELATED"/>
    <property type="match status" value="1"/>
</dbReference>
<dbReference type="PANTHER" id="PTHR33931:SF5">
    <property type="entry name" value="UPF0299 MEMBRANE PROTEIN YOHJ"/>
    <property type="match status" value="1"/>
</dbReference>
<dbReference type="Pfam" id="PF03788">
    <property type="entry name" value="LrgA"/>
    <property type="match status" value="1"/>
</dbReference>
<organism>
    <name type="scientific">Serratia proteamaculans (strain 568)</name>
    <dbReference type="NCBI Taxonomy" id="399741"/>
    <lineage>
        <taxon>Bacteria</taxon>
        <taxon>Pseudomonadati</taxon>
        <taxon>Pseudomonadota</taxon>
        <taxon>Gammaproteobacteria</taxon>
        <taxon>Enterobacterales</taxon>
        <taxon>Yersiniaceae</taxon>
        <taxon>Serratia</taxon>
    </lineage>
</organism>
<sequence length="135" mass="15060">MAKLFTLCWKYLRAIVLIYLCLFAGNAIAALLPIAIPGSIIGMLLLFALLSTQIMPARWVKPGCHLLIRYMVLLFVPIGVGVMKYYDQILDHLGPLVVSCIISTLMVLVVVGYTSHYFHRERRIVGKPDAAEGEK</sequence>
<accession>A8GC34</accession>
<protein>
    <recommendedName>
        <fullName evidence="1">UPF0299 membrane protein Spro_1570</fullName>
    </recommendedName>
</protein>
<name>Y1570_SERP5</name>
<comment type="subcellular location">
    <subcellularLocation>
        <location evidence="1">Cell inner membrane</location>
        <topology evidence="1">Multi-pass membrane protein</topology>
    </subcellularLocation>
</comment>
<comment type="similarity">
    <text evidence="1">Belongs to the UPF0299 family.</text>
</comment>
<gene>
    <name type="ordered locus">Spro_1570</name>
</gene>
<proteinExistence type="inferred from homology"/>
<evidence type="ECO:0000255" key="1">
    <source>
        <dbReference type="HAMAP-Rule" id="MF_01144"/>
    </source>
</evidence>
<keyword id="KW-0997">Cell inner membrane</keyword>
<keyword id="KW-1003">Cell membrane</keyword>
<keyword id="KW-0472">Membrane</keyword>
<keyword id="KW-0812">Transmembrane</keyword>
<keyword id="KW-1133">Transmembrane helix</keyword>